<sequence length="313" mass="35308">MELPDVQSSLPEVRINLTRVGVKNVQKLVEVARPGKRPVIFISNFDVFVDLPGSLKGANLSRNFEVIDDVLQQAIDGDVNEIEELCSAVARKLLDRHEYAERTEVRMRSKFMVRRETPVSETSCHEVVNVHAKAIAQRNEGDPIIRKSIGAEVTGMTACPCAQNIMKDHALHVLENLGVAEDKIEAFFNEVPMATHNQRGRGFLCIEIDDDQHISLEKIIKILKDSMSARIYELLKRGDESYVVMEAHKNPRFVEDCVREMARKVIAQFHDLPGDSVVTIKQTNEESIHQHNAYAERKATIAELVSEMDKGTL</sequence>
<comment type="function">
    <text evidence="1">Converts GTP to 7,8-dihydro-D-neopterin 2',3'-cyclic phosphate, the first intermediate in the biosynthesis of coenzyme methanopterin.</text>
</comment>
<comment type="catalytic activity">
    <reaction evidence="1">
        <text>GTP + H2O = 7,8-dihydroneopterin 2',3'-cyclic phosphate + formate + diphosphate + H(+)</text>
        <dbReference type="Rhea" id="RHEA:25860"/>
        <dbReference type="ChEBI" id="CHEBI:15377"/>
        <dbReference type="ChEBI" id="CHEBI:15378"/>
        <dbReference type="ChEBI" id="CHEBI:15740"/>
        <dbReference type="ChEBI" id="CHEBI:33019"/>
        <dbReference type="ChEBI" id="CHEBI:37565"/>
        <dbReference type="ChEBI" id="CHEBI:58854"/>
        <dbReference type="EC" id="3.5.4.39"/>
    </reaction>
</comment>
<comment type="cofactor">
    <cofactor evidence="1">
        <name>Fe(2+)</name>
        <dbReference type="ChEBI" id="CHEBI:29033"/>
    </cofactor>
    <text evidence="1">Binds 1 Fe(2+) ion per subunit.</text>
</comment>
<comment type="pathway">
    <text evidence="1">Cofactor biosynthesis; 5,6,7,8-tetrahydromethanopterin biosynthesis.</text>
</comment>
<comment type="subunit">
    <text evidence="1">Homodimer.</text>
</comment>
<comment type="similarity">
    <text evidence="1">Belongs to the GTP cyclohydrolase IV family.</text>
</comment>
<feature type="chain" id="PRO_0000289537" description="GTP cyclohydrolase MptA">
    <location>
        <begin position="1"/>
        <end position="313"/>
    </location>
</feature>
<feature type="site" description="May be catalytically important" evidence="1">
    <location>
        <position position="159"/>
    </location>
</feature>
<evidence type="ECO:0000255" key="1">
    <source>
        <dbReference type="HAMAP-Rule" id="MF_01527"/>
    </source>
</evidence>
<protein>
    <recommendedName>
        <fullName evidence="1">GTP cyclohydrolase MptA</fullName>
        <ecNumber evidence="1">3.5.4.39</ecNumber>
    </recommendedName>
    <alternativeName>
        <fullName evidence="1">GTP cyclohydrolase IV</fullName>
    </alternativeName>
</protein>
<dbReference type="EC" id="3.5.4.39" evidence="1"/>
<dbReference type="EMBL" id="CP000562">
    <property type="protein sequence ID" value="ABN58096.1"/>
    <property type="molecule type" value="Genomic_DNA"/>
</dbReference>
<dbReference type="RefSeq" id="WP_011845005.1">
    <property type="nucleotide sequence ID" value="NC_009051.1"/>
</dbReference>
<dbReference type="SMR" id="A3CXJ6"/>
<dbReference type="STRING" id="368407.Memar_2173"/>
<dbReference type="GeneID" id="4846362"/>
<dbReference type="GeneID" id="76730256"/>
<dbReference type="KEGG" id="mem:Memar_2173"/>
<dbReference type="eggNOG" id="arCOG04301">
    <property type="taxonomic scope" value="Archaea"/>
</dbReference>
<dbReference type="HOGENOM" id="CLU_062816_1_0_2"/>
<dbReference type="OrthoDB" id="53087at2157"/>
<dbReference type="UniPathway" id="UPA00065"/>
<dbReference type="Proteomes" id="UP000002146">
    <property type="component" value="Chromosome"/>
</dbReference>
<dbReference type="GO" id="GO:0003934">
    <property type="term" value="F:GTP cyclohydrolase I activity"/>
    <property type="evidence" value="ECO:0007669"/>
    <property type="project" value="InterPro"/>
</dbReference>
<dbReference type="GO" id="GO:0044682">
    <property type="term" value="F:GTP cyclohydrolase IV activity"/>
    <property type="evidence" value="ECO:0007669"/>
    <property type="project" value="UniProtKB-UniRule"/>
</dbReference>
<dbReference type="GO" id="GO:0005506">
    <property type="term" value="F:iron ion binding"/>
    <property type="evidence" value="ECO:0007669"/>
    <property type="project" value="UniProtKB-UniRule"/>
</dbReference>
<dbReference type="GO" id="GO:2001118">
    <property type="term" value="P:tetrahydromethanopterin biosynthetic process"/>
    <property type="evidence" value="ECO:0007669"/>
    <property type="project" value="UniProtKB-UniRule"/>
</dbReference>
<dbReference type="Gene3D" id="3.10.270.10">
    <property type="entry name" value="Urate Oxidase"/>
    <property type="match status" value="1"/>
</dbReference>
<dbReference type="HAMAP" id="MF_01527_A">
    <property type="entry name" value="GTP_cyclohydrol_A"/>
    <property type="match status" value="1"/>
</dbReference>
<dbReference type="InterPro" id="IPR003801">
    <property type="entry name" value="GTP_cyclohydrolase_FolE2/MptA"/>
</dbReference>
<dbReference type="InterPro" id="IPR022840">
    <property type="entry name" value="GTP_cyclohydrolase_MptA"/>
</dbReference>
<dbReference type="NCBIfam" id="TIGR00294">
    <property type="entry name" value="GTP cyclohydrolase MptA"/>
    <property type="match status" value="1"/>
</dbReference>
<dbReference type="PANTHER" id="PTHR36445">
    <property type="entry name" value="GTP CYCLOHYDROLASE MPTA"/>
    <property type="match status" value="1"/>
</dbReference>
<dbReference type="PANTHER" id="PTHR36445:SF1">
    <property type="entry name" value="GTP CYCLOHYDROLASE MPTA"/>
    <property type="match status" value="1"/>
</dbReference>
<dbReference type="Pfam" id="PF02649">
    <property type="entry name" value="GCHY-1"/>
    <property type="match status" value="1"/>
</dbReference>
<organism>
    <name type="scientific">Methanoculleus marisnigri (strain ATCC 35101 / DSM 1498 / JR1)</name>
    <dbReference type="NCBI Taxonomy" id="368407"/>
    <lineage>
        <taxon>Archaea</taxon>
        <taxon>Methanobacteriati</taxon>
        <taxon>Methanobacteriota</taxon>
        <taxon>Stenosarchaea group</taxon>
        <taxon>Methanomicrobia</taxon>
        <taxon>Methanomicrobiales</taxon>
        <taxon>Methanomicrobiaceae</taxon>
        <taxon>Methanoculleus</taxon>
    </lineage>
</organism>
<keyword id="KW-0378">Hydrolase</keyword>
<keyword id="KW-0408">Iron</keyword>
<keyword id="KW-0479">Metal-binding</keyword>
<accession>A3CXJ6</accession>
<reference key="1">
    <citation type="journal article" date="2009" name="Stand. Genomic Sci.">
        <title>Complete genome sequence of Methanoculleus marisnigri Romesser et al. 1981 type strain JR1.</title>
        <authorList>
            <person name="Anderson I.J."/>
            <person name="Sieprawska-Lupa M."/>
            <person name="Lapidus A."/>
            <person name="Nolan M."/>
            <person name="Copeland A."/>
            <person name="Glavina Del Rio T."/>
            <person name="Tice H."/>
            <person name="Dalin E."/>
            <person name="Barry K."/>
            <person name="Saunders E."/>
            <person name="Han C."/>
            <person name="Brettin T."/>
            <person name="Detter J.C."/>
            <person name="Bruce D."/>
            <person name="Mikhailova N."/>
            <person name="Pitluck S."/>
            <person name="Hauser L."/>
            <person name="Land M."/>
            <person name="Lucas S."/>
            <person name="Richardson P."/>
            <person name="Whitman W.B."/>
            <person name="Kyrpides N.C."/>
        </authorList>
    </citation>
    <scope>NUCLEOTIDE SEQUENCE [LARGE SCALE GENOMIC DNA]</scope>
    <source>
        <strain>ATCC 35101 / DSM 1498 / JR1</strain>
    </source>
</reference>
<proteinExistence type="inferred from homology"/>
<gene>
    <name evidence="1" type="primary">mptA</name>
    <name type="ordered locus">Memar_2173</name>
</gene>
<name>MPTA_METMJ</name>